<feature type="chain" id="PRO_1000145584" description="Glutathione-regulated potassium-efflux system ancillary protein KefG">
    <location>
        <begin position="1"/>
        <end position="183"/>
    </location>
</feature>
<sequence length="183" mass="20893">MSQPAKVLLLYAHPESQDSVANRVLLKPAIQHNNVTVHDLYARYPDFFIDTPYEQALLREHDVIVFQHPLYTYSCPALLKEWLDRVLSRGLASGPGGNQLVGKYWRSVITTGEPESAYRYDALNRYPMSDVLRPFELTAAMCRMHWMPPIIVYWARRQSPQTLASHAKAYGEWLANPVSAGGY</sequence>
<accession>B5RGZ7</accession>
<evidence type="ECO:0000255" key="1">
    <source>
        <dbReference type="HAMAP-Rule" id="MF_01415"/>
    </source>
</evidence>
<keyword id="KW-0997">Cell inner membrane</keyword>
<keyword id="KW-1003">Cell membrane</keyword>
<keyword id="KW-0472">Membrane</keyword>
<keyword id="KW-0520">NAD</keyword>
<keyword id="KW-0560">Oxidoreductase</keyword>
<name>KEFG_SALG2</name>
<organism>
    <name type="scientific">Salmonella gallinarum (strain 287/91 / NCTC 13346)</name>
    <dbReference type="NCBI Taxonomy" id="550538"/>
    <lineage>
        <taxon>Bacteria</taxon>
        <taxon>Pseudomonadati</taxon>
        <taxon>Pseudomonadota</taxon>
        <taxon>Gammaproteobacteria</taxon>
        <taxon>Enterobacterales</taxon>
        <taxon>Enterobacteriaceae</taxon>
        <taxon>Salmonella</taxon>
    </lineage>
</organism>
<dbReference type="EC" id="1.6.5.2" evidence="1"/>
<dbReference type="EMBL" id="AM933173">
    <property type="protein sequence ID" value="CAR39751.1"/>
    <property type="molecule type" value="Genomic_DNA"/>
</dbReference>
<dbReference type="RefSeq" id="WP_000081821.1">
    <property type="nucleotide sequence ID" value="NC_011274.1"/>
</dbReference>
<dbReference type="SMR" id="B5RGZ7"/>
<dbReference type="KEGG" id="seg:SG3980"/>
<dbReference type="HOGENOM" id="CLU_058643_0_1_6"/>
<dbReference type="Proteomes" id="UP000008321">
    <property type="component" value="Chromosome"/>
</dbReference>
<dbReference type="GO" id="GO:0005886">
    <property type="term" value="C:plasma membrane"/>
    <property type="evidence" value="ECO:0007669"/>
    <property type="project" value="UniProtKB-SubCell"/>
</dbReference>
<dbReference type="GO" id="GO:0009055">
    <property type="term" value="F:electron transfer activity"/>
    <property type="evidence" value="ECO:0007669"/>
    <property type="project" value="TreeGrafter"/>
</dbReference>
<dbReference type="GO" id="GO:0010181">
    <property type="term" value="F:FMN binding"/>
    <property type="evidence" value="ECO:0007669"/>
    <property type="project" value="TreeGrafter"/>
</dbReference>
<dbReference type="GO" id="GO:0050136">
    <property type="term" value="F:NADH:ubiquinone reductase (non-electrogenic) activity"/>
    <property type="evidence" value="ECO:0007669"/>
    <property type="project" value="RHEA"/>
</dbReference>
<dbReference type="GO" id="GO:0008753">
    <property type="term" value="F:NADPH dehydrogenase (quinone) activity"/>
    <property type="evidence" value="ECO:0007669"/>
    <property type="project" value="RHEA"/>
</dbReference>
<dbReference type="GO" id="GO:1901381">
    <property type="term" value="P:positive regulation of potassium ion transmembrane transport"/>
    <property type="evidence" value="ECO:0007669"/>
    <property type="project" value="UniProtKB-UniRule"/>
</dbReference>
<dbReference type="GO" id="GO:0006813">
    <property type="term" value="P:potassium ion transport"/>
    <property type="evidence" value="ECO:0007669"/>
    <property type="project" value="InterPro"/>
</dbReference>
<dbReference type="FunFam" id="3.40.50.360:FF:000013">
    <property type="entry name" value="Glutathione-regulated potassium-efflux system ancillary protein KefG"/>
    <property type="match status" value="1"/>
</dbReference>
<dbReference type="Gene3D" id="3.40.50.360">
    <property type="match status" value="1"/>
</dbReference>
<dbReference type="HAMAP" id="MF_01415">
    <property type="entry name" value="K_H_efflux_KefG"/>
    <property type="match status" value="1"/>
</dbReference>
<dbReference type="InterPro" id="IPR003680">
    <property type="entry name" value="Flavodoxin_fold"/>
</dbReference>
<dbReference type="InterPro" id="IPR029039">
    <property type="entry name" value="Flavoprotein-like_sf"/>
</dbReference>
<dbReference type="InterPro" id="IPR023947">
    <property type="entry name" value="K_H_efflux_KefG"/>
</dbReference>
<dbReference type="InterPro" id="IPR046980">
    <property type="entry name" value="KefG/KefF"/>
</dbReference>
<dbReference type="NCBIfam" id="NF003430">
    <property type="entry name" value="PRK04930.1"/>
    <property type="match status" value="1"/>
</dbReference>
<dbReference type="PANTHER" id="PTHR47307">
    <property type="entry name" value="GLUTATHIONE-REGULATED POTASSIUM-EFFLUX SYSTEM ANCILLARY PROTEIN KEFG"/>
    <property type="match status" value="1"/>
</dbReference>
<dbReference type="PANTHER" id="PTHR47307:SF1">
    <property type="entry name" value="GLUTATHIONE-REGULATED POTASSIUM-EFFLUX SYSTEM ANCILLARY PROTEIN KEFG"/>
    <property type="match status" value="1"/>
</dbReference>
<dbReference type="Pfam" id="PF02525">
    <property type="entry name" value="Flavodoxin_2"/>
    <property type="match status" value="1"/>
</dbReference>
<dbReference type="SUPFAM" id="SSF52218">
    <property type="entry name" value="Flavoproteins"/>
    <property type="match status" value="1"/>
</dbReference>
<gene>
    <name evidence="1" type="primary">kefG</name>
    <name type="ordered locus">SG3980</name>
</gene>
<comment type="function">
    <text evidence="1">Regulatory subunit of a potassium efflux system that confers protection against electrophiles. Required for full activity of KefB.</text>
</comment>
<comment type="catalytic activity">
    <reaction evidence="1">
        <text>a quinone + NADH + H(+) = a quinol + NAD(+)</text>
        <dbReference type="Rhea" id="RHEA:46160"/>
        <dbReference type="ChEBI" id="CHEBI:15378"/>
        <dbReference type="ChEBI" id="CHEBI:24646"/>
        <dbReference type="ChEBI" id="CHEBI:57540"/>
        <dbReference type="ChEBI" id="CHEBI:57945"/>
        <dbReference type="ChEBI" id="CHEBI:132124"/>
        <dbReference type="EC" id="1.6.5.2"/>
    </reaction>
</comment>
<comment type="catalytic activity">
    <reaction evidence="1">
        <text>a quinone + NADPH + H(+) = a quinol + NADP(+)</text>
        <dbReference type="Rhea" id="RHEA:46164"/>
        <dbReference type="ChEBI" id="CHEBI:15378"/>
        <dbReference type="ChEBI" id="CHEBI:24646"/>
        <dbReference type="ChEBI" id="CHEBI:57783"/>
        <dbReference type="ChEBI" id="CHEBI:58349"/>
        <dbReference type="ChEBI" id="CHEBI:132124"/>
        <dbReference type="EC" id="1.6.5.2"/>
    </reaction>
</comment>
<comment type="subunit">
    <text evidence="1">Interacts with KefB.</text>
</comment>
<comment type="subcellular location">
    <subcellularLocation>
        <location evidence="1">Cell inner membrane</location>
        <topology evidence="1">Peripheral membrane protein</topology>
        <orientation evidence="1">Cytoplasmic side</orientation>
    </subcellularLocation>
</comment>
<comment type="similarity">
    <text evidence="1">Belongs to the NAD(P)H dehydrogenase (quinone) family. KefG subfamily.</text>
</comment>
<reference key="1">
    <citation type="journal article" date="2008" name="Genome Res.">
        <title>Comparative genome analysis of Salmonella enteritidis PT4 and Salmonella gallinarum 287/91 provides insights into evolutionary and host adaptation pathways.</title>
        <authorList>
            <person name="Thomson N.R."/>
            <person name="Clayton D.J."/>
            <person name="Windhorst D."/>
            <person name="Vernikos G."/>
            <person name="Davidson S."/>
            <person name="Churcher C."/>
            <person name="Quail M.A."/>
            <person name="Stevens M."/>
            <person name="Jones M.A."/>
            <person name="Watson M."/>
            <person name="Barron A."/>
            <person name="Layton A."/>
            <person name="Pickard D."/>
            <person name="Kingsley R.A."/>
            <person name="Bignell A."/>
            <person name="Clark L."/>
            <person name="Harris B."/>
            <person name="Ormond D."/>
            <person name="Abdellah Z."/>
            <person name="Brooks K."/>
            <person name="Cherevach I."/>
            <person name="Chillingworth T."/>
            <person name="Woodward J."/>
            <person name="Norberczak H."/>
            <person name="Lord A."/>
            <person name="Arrowsmith C."/>
            <person name="Jagels K."/>
            <person name="Moule S."/>
            <person name="Mungall K."/>
            <person name="Saunders M."/>
            <person name="Whitehead S."/>
            <person name="Chabalgoity J.A."/>
            <person name="Maskell D."/>
            <person name="Humphreys T."/>
            <person name="Roberts M."/>
            <person name="Barrow P.A."/>
            <person name="Dougan G."/>
            <person name="Parkhill J."/>
        </authorList>
    </citation>
    <scope>NUCLEOTIDE SEQUENCE [LARGE SCALE GENOMIC DNA]</scope>
    <source>
        <strain>287/91 / NCTC 13346</strain>
    </source>
</reference>
<proteinExistence type="inferred from homology"/>
<protein>
    <recommendedName>
        <fullName evidence="1">Glutathione-regulated potassium-efflux system ancillary protein KefG</fullName>
    </recommendedName>
    <alternativeName>
        <fullName evidence="1">Putative quinone oxidoreductase KefG</fullName>
        <ecNumber evidence="1">1.6.5.2</ecNumber>
    </alternativeName>
</protein>